<sequence>MATTMEQETCAHSLTFEECPKCSALQYRNGFYLLKYDEEWYPEELLTDGEDDVFDPELDMEVVFELQGNSTSSDKNNSSSEGNEGVIINNFYSNQYQNSIDLSANAAGSDPPRLRSIFESLSGAVNAFSNMLPLLADQNTEEMENLSDRGLKTLPAIRSQTPSQQWAVLSVMVPFMMESIRHHVLTLLQKRFWRWKGTTPSRLMIGHQHKSPLSTSAFPFLTSCPVKMVVSLVALRRHYLVKTGWRVQVQCNASQFHAGGLLVFMAPEYPTLDAFAMDNRWSKDNLPNGTRTQTNKKGPFAMDHQNFWQWTLYPHQFLNLRTNTTVDLEVPYVNIAPTSSWTQHASWTLVIAVVAPLTYSTGASTSLDITASIQPVRPVFNGLRHETLSRQSPIPVTIREHAGTWYSTLPDSTVPIYGKTPVAPSNYMVGEYKDFLEIAQIPTFIGNKIPNAVPYIEASNTAVKTQPLATYQVTLSCSCLANTFLAALSRNFAQYRGSLVYTFVFTGTAMMKGKFLIAYTPPGAGKPTSRDQAMQATYAIWDLGLNSSYSFTVPFISPTHFRMVGTDQVNITNADGWVTVWQLTPLTYPPGCPTSAKILTMVSAGKDFSLKMPISPAPWSPQGVENAEKGVTENTNATADFVAQPVYLPENQTKVAFFYNRSSPIGAFTVKSGSLESGFAPFSNGTCPNSVILTPGPQFDPAYDQLRPQRLTEIWGNGNEETSKVFPLKSKQDYSFCLFSPFVYYKCDLEVTLSPHTSGNHGLLVRWCPTGTPTKPTTQVLHEVSSLSEGRTPQVYSAGPGISNQISFVVPYNSPLSVLSAVWYNGHKRFDNTGSLGIAPNSDFGTLFFAGTKPDIKFTVYLRYKNKRVFCPRPTVFFPWPTSGDKIDMTPRAGVLMLESPNALDISRTYPTLHVLIQFNHRGLEVRLFRHGHFWAETRADVILRSKTKQVSFLSNGNYPSMDSRAPWNPWKNTYQAVLRAEPCRVTMDIYYKRVRPFRLPLVQKEWPVREENVFGLYRIFNAHYAGYFADLLIHDIETNPGPFMFRPRKQVFQTQGAAVSSMAQTLLPNDLASKAMGSAFTALLDANEDAQKAMKIIKTLSSLSDAWENVKETLNNPEFWKQLLSRCVQLIAGMTIAVMHPDPLTLLCLGTLTAAEITSQTSLCEEIAAKFKTIFITPPPRFPTISLFQQQSPLKQVNDIFSLAKNLDWAVKTVEKVVDWFGTWIVQEEKEQTLDQLLQRFPEHAKRISDLRNGMAAYVECKESFDFFEKLYNQAVKEKRTGIAAVCEKFRQKHDHATARCEPVVIVLRGDAGQGKSLSSQVIAQAVSKTIFGRQSVYSLPPDSDFFDGYENQFAAIMDDLGQNPDGSDFTTFCQMVSTTNFLPNMASLERKGTPFTSQLVVATTNLPEFRPVTIAHYPAVERRITFDYSVSAGPVCSKTEAGYKVLDVERAFRPTGEAPLPCFQNNCLFLEKAGLQFRDNRTKEIISLVDVIERAVARIERKKKVLTTVQTLVAQGPVDEVSFHSVVQQLKARQQATDEQLEELQEAFAKVQERNSVFSDWLKISAMLCAATLALSQVVKMAKAVKQMVKPDLVRVQLDEQEQGPYNETARVKPKTLQLLDIQGPNPVMDFEKYVAKHVTAPIGFVYPTGVSTQTCLLVRGRTLVVNRHMAESDWTSIVVRGVTHARSTVKILAIAKAGKETDVSFIRLSSGPLFRDNTSKFVKAGDVLPTGAAPVTGIMNTDIPMMYTGTFLKAGVSVPVETGQTFNHCIHYKANTRKGWCGSALLADLGGSKKILGIHSAGSMGIAAASIVSQEMIRAVVNAFEPQGALERLPDGPRIHVPRKTALRPTVARQVFQPAYAPAVLSKFDPRTEADVDEVAFSKHTSNQESLPPVFRMVAKEYANRVFTLLGKDNGRLTVKQALEGLEGMDPMDRNTSPGLPYTALGMRRTDVVDWESATLIPFAAERLRKMNEGDFSEVVYQTFLKDELRPIEKVQAAKTRIVDVPPFEHCILGRQLLGKFASKFQTQPGLELGSAIGCDPDVHWTAFGVAMQGFERVYDVDYSNFDSTHSVAMFRLLAEEFFTPENGFDPLTREYLESLAISTHAFEEKRFLITGGLPSGCAATSMLNTIMNNIIIRAGLYLTYKNFEFDDVKVLSYGDDLLVATNYQLDFDKVRASLAKTGYKITPANTTSTFPLNSTLEDVVFLKRKFKKEGPLYRPVMNREALEAMLSYYRPGTLSEKLTSITMLAVHSGKQEYDRLFAPFREVGVVVPSFESVEYRWRSLFW</sequence>
<feature type="chain" id="PRO_0000446093" description="Genome polyprotein">
    <location>
        <begin position="1"/>
        <end position="2290"/>
    </location>
</feature>
<feature type="chain" id="PRO_0000039780" description="Leader protein">
    <location>
        <begin position="1"/>
        <end position="67"/>
    </location>
</feature>
<feature type="chain" id="PRO_0000310967" description="Capsid protein VP0">
    <location>
        <begin position="68"/>
        <end position="391"/>
    </location>
</feature>
<feature type="chain" id="PRO_0000039781" description="Capsid protein VP4">
    <location>
        <begin position="68"/>
        <end position="136"/>
    </location>
</feature>
<feature type="chain" id="PRO_0000039782" description="Capsid protein VP2">
    <location>
        <begin position="137"/>
        <end position="391"/>
    </location>
</feature>
<feature type="chain" id="PRO_0000039783" description="Capsid protein VP3">
    <location>
        <begin position="392"/>
        <end position="622"/>
    </location>
</feature>
<feature type="chain" id="PRO_0000039784" description="Capsid protein VP1">
    <location>
        <begin position="623"/>
        <end position="899"/>
    </location>
</feature>
<feature type="chain" id="PRO_0000039785" description="Protein 2A">
    <location>
        <begin position="900"/>
        <end position="1042"/>
    </location>
</feature>
<feature type="chain" id="PRO_0000039786" description="Protein 2B">
    <location>
        <begin position="1043"/>
        <end position="1192"/>
    </location>
</feature>
<feature type="chain" id="PRO_0000039787" description="Protein 2C">
    <location>
        <begin position="1193"/>
        <end position="1517"/>
    </location>
</feature>
<feature type="chain" id="PRO_0000039788" description="Protein 3A">
    <location>
        <begin position="1518"/>
        <end position="1605"/>
    </location>
</feature>
<feature type="chain" id="PRO_0000039789" description="VPg">
    <location>
        <begin position="1606"/>
        <end position="1625"/>
    </location>
</feature>
<feature type="chain" id="PRO_0000039790" description="Protease 3C">
    <location>
        <begin position="1626"/>
        <end position="1830"/>
    </location>
</feature>
<feature type="chain" id="PRO_0000039791" description="RNA-directed RNA polymerase">
    <location>
        <begin position="1831"/>
        <end position="2290"/>
    </location>
</feature>
<feature type="domain" description="SF3 helicase" evidence="11">
    <location>
        <begin position="1279"/>
        <end position="1445"/>
    </location>
</feature>
<feature type="domain" description="Peptidase C3" evidence="12">
    <location>
        <begin position="1628"/>
        <end position="1820"/>
    </location>
</feature>
<feature type="domain" description="RdRp catalytic" evidence="10">
    <location>
        <begin position="2059"/>
        <end position="2177"/>
    </location>
</feature>
<feature type="zinc finger region" evidence="6">
    <location>
        <begin position="10"/>
        <end position="22"/>
    </location>
</feature>
<feature type="region of interest" description="Acidic" evidence="24">
    <location>
        <begin position="37"/>
        <end position="61"/>
    </location>
</feature>
<feature type="region of interest" description="Host EIF4E binding" evidence="8">
    <location>
        <begin position="1028"/>
        <end position="1034"/>
    </location>
</feature>
<feature type="short sequence motif" description="Nuclear localization signal" evidence="8">
    <location>
        <begin position="993"/>
        <end position="1001"/>
    </location>
</feature>
<feature type="active site" description="For protease 3C activity" evidence="12 25">
    <location>
        <position position="1671"/>
    </location>
</feature>
<feature type="active site" description="For protease 3C activity" evidence="12">
    <location>
        <position position="1705"/>
    </location>
</feature>
<feature type="active site" description="For protease 3C activity" evidence="12 25">
    <location>
        <position position="1784"/>
    </location>
</feature>
<feature type="active site" description="For RdRp activity" evidence="6">
    <location>
        <position position="2065"/>
    </location>
</feature>
<feature type="active site" description="For RdRp activity" evidence="6">
    <location>
        <position position="2163"/>
    </location>
</feature>
<feature type="binding site" evidence="6">
    <location>
        <position position="22"/>
    </location>
    <ligand>
        <name>RNA</name>
        <dbReference type="ChEBI" id="CHEBI:33697"/>
    </ligand>
</feature>
<feature type="binding site" evidence="6">
    <location>
        <position position="46"/>
    </location>
    <ligand>
        <name>RNA</name>
        <dbReference type="ChEBI" id="CHEBI:33697"/>
    </ligand>
</feature>
<feature type="binding site" evidence="6">
    <location>
        <position position="47"/>
    </location>
    <ligand>
        <name>RNA</name>
        <dbReference type="ChEBI" id="CHEBI:33697"/>
    </ligand>
</feature>
<feature type="binding site" evidence="6">
    <location>
        <position position="48"/>
    </location>
    <ligand>
        <name>RNA</name>
        <dbReference type="ChEBI" id="CHEBI:33697"/>
    </ligand>
</feature>
<feature type="binding site" evidence="6">
    <location>
        <position position="49"/>
    </location>
    <ligand>
        <name>RNA</name>
        <dbReference type="ChEBI" id="CHEBI:33697"/>
    </ligand>
</feature>
<feature type="binding site" evidence="6">
    <location>
        <position position="50"/>
    </location>
    <ligand>
        <name>RNA</name>
        <dbReference type="ChEBI" id="CHEBI:33697"/>
    </ligand>
</feature>
<feature type="binding site" evidence="6">
    <location>
        <position position="69"/>
    </location>
    <ligand>
        <name>RNA</name>
        <dbReference type="ChEBI" id="CHEBI:33697"/>
    </ligand>
</feature>
<feature type="binding site" evidence="6">
    <location>
        <position position="70"/>
    </location>
    <ligand>
        <name>RNA</name>
        <dbReference type="ChEBI" id="CHEBI:33697"/>
    </ligand>
</feature>
<feature type="binding site" evidence="6">
    <location>
        <position position="93"/>
    </location>
    <ligand>
        <name>RNA</name>
        <dbReference type="ChEBI" id="CHEBI:33697"/>
    </ligand>
</feature>
<feature type="binding site" evidence="6">
    <location>
        <position position="95"/>
    </location>
    <ligand>
        <name>RNA</name>
        <dbReference type="ChEBI" id="CHEBI:33697"/>
    </ligand>
</feature>
<feature type="binding site" evidence="6">
    <location>
        <position position="97"/>
    </location>
    <ligand>
        <name>RNA</name>
        <dbReference type="ChEBI" id="CHEBI:33697"/>
    </ligand>
</feature>
<feature type="binding site" evidence="6">
    <location>
        <position position="100"/>
    </location>
    <ligand>
        <name>RNA</name>
        <dbReference type="ChEBI" id="CHEBI:33697"/>
    </ligand>
</feature>
<feature type="binding site" evidence="11">
    <location>
        <begin position="1311"/>
        <end position="1318"/>
    </location>
    <ligand>
        <name>ATP</name>
        <dbReference type="ChEBI" id="CHEBI:30616"/>
    </ligand>
</feature>
<feature type="site" description="Cleavage" evidence="9">
    <location>
        <begin position="136"/>
        <end position="137"/>
    </location>
</feature>
<feature type="site" description="Cleavage; by protease 3C" evidence="21 23">
    <location>
        <begin position="391"/>
        <end position="392"/>
    </location>
</feature>
<feature type="site" description="Cleavage; by protease 3C" evidence="21 23">
    <location>
        <begin position="622"/>
        <end position="623"/>
    </location>
</feature>
<feature type="site" description="Cleavage; by protease 3C" evidence="21 23">
    <location>
        <begin position="899"/>
        <end position="900"/>
    </location>
</feature>
<feature type="site" description="Cleavage; by ribosomal skip" evidence="16">
    <location>
        <begin position="1042"/>
        <end position="1043"/>
    </location>
</feature>
<feature type="site" description="Cleavage; by protease 3C" evidence="21 23">
    <location>
        <begin position="1192"/>
        <end position="1193"/>
    </location>
</feature>
<feature type="site" description="Cleavage; by protease 3C" evidence="21 23">
    <location>
        <begin position="1517"/>
        <end position="1518"/>
    </location>
</feature>
<feature type="site" description="Cleavage; by protease 3C" evidence="21 23">
    <location>
        <begin position="1605"/>
        <end position="1606"/>
    </location>
</feature>
<feature type="site" description="Cleavage; by protease 3C" evidence="21 23">
    <location>
        <begin position="1625"/>
        <end position="1626"/>
    </location>
</feature>
<feature type="site" description="Cleavage; by protease 3C" evidence="21 23">
    <location>
        <begin position="1830"/>
        <end position="1831"/>
    </location>
</feature>
<feature type="modified residue" description="Phosphotyrosine; by host SYK" evidence="8">
    <location>
        <position position="41"/>
    </location>
</feature>
<feature type="modified residue" description="Phosphothreonine; by host CK2" evidence="8">
    <location>
        <position position="47"/>
    </location>
</feature>
<feature type="modified residue" description="O-(5'-phospho-RNA)-tyrosine" evidence="2">
    <location>
        <position position="1608"/>
    </location>
</feature>
<feature type="lipid moiety-binding region" description="N-myristoyl glycine; by host" evidence="7">
    <location>
        <position position="68"/>
    </location>
</feature>
<feature type="mutagenesis site" description="No effect on the interaction between protein 2C and host IFIH1/MDA5 and on the inhibition of IRF3 phosphorylation." evidence="19">
    <original>K</original>
    <variation>A</variation>
    <location>
        <position position="1217"/>
    </location>
</feature>
<feature type="mutagenesis site" description="Loss of interaction between protein 2C and host IFIH1/MDA5 and loss of inhibition of IRF3 phosphorylation." evidence="19">
    <original>V</original>
    <variation>A</variation>
    <location>
        <position position="1218"/>
    </location>
</feature>
<feature type="mutagenesis site" description="No effect on the interaction between protein 2C and host IFIH1/MDA5 and on the inhibition of IRF3 phosphorylation." evidence="19">
    <original>V</original>
    <variation>A</variation>
    <location>
        <position position="1219"/>
    </location>
</feature>
<feature type="mutagenesis site" description="Complete loss of inhibition of host TBK1-TANK and IKKepsilon-TANK-mediated IFN-beta expression, complete loss of IRF3 phosphorylation; when associated with A-1784." evidence="18">
    <original>H</original>
    <variation>A</variation>
    <location>
        <position position="1671"/>
    </location>
</feature>
<feature type="mutagenesis site" description="Complete loss of inhibition of host TBK1-TANK and IKKepsilon-TANK-mediated IFN-beta expression, complete loss of IRF3 phosphorylation; when associated with A-1671." evidence="18">
    <original>C</original>
    <variation>A</variation>
    <location>
        <position position="1784"/>
    </location>
</feature>
<feature type="sequence conflict" description="In Ref. 2; AAA43036." evidence="24" ref="2">
    <original>S</original>
    <variation>P</variation>
    <location>
        <position position="1337"/>
    </location>
</feature>
<feature type="sequence conflict" description="In Ref. 2; AAA43036." evidence="24" ref="2">
    <original>F</original>
    <variation>L</variation>
    <location>
        <position position="1397"/>
    </location>
</feature>
<feature type="sequence conflict" description="In Ref. 2; AAA43036." evidence="24" ref="2">
    <original>G</original>
    <variation>A</variation>
    <location>
        <position position="1518"/>
    </location>
</feature>
<feature type="sequence conflict" description="In Ref. 2; AAA43036." evidence="24" ref="2">
    <original>Q</original>
    <variation>E</variation>
    <location>
        <position position="1537"/>
    </location>
</feature>
<feature type="sequence conflict" description="In Ref. 2; AAA43036." evidence="24" ref="2">
    <original>N</original>
    <variation>S</variation>
    <location>
        <position position="1557"/>
    </location>
</feature>
<feature type="sequence conflict" description="In Ref. 2; AAA43036." evidence="24" ref="2">
    <original>A</original>
    <variation>T</variation>
    <location>
        <position position="1612"/>
    </location>
</feature>
<feature type="sequence conflict" description="In Ref. 2; AAA43036." evidence="24" ref="2">
    <original>L</original>
    <variation>V</variation>
    <location>
        <position position="1755"/>
    </location>
</feature>
<feature type="sequence conflict" description="In Ref. 2; AAA43036." evidence="24" ref="2">
    <original>D</original>
    <variation>N</variation>
    <location>
        <position position="1916"/>
    </location>
</feature>
<feature type="sequence conflict" description="In Ref. 2; AAA43036." evidence="24" ref="2">
    <original>FL</original>
    <variation>IH</variation>
    <location>
        <begin position="1987"/>
        <end position="1988"/>
    </location>
</feature>
<feature type="sequence conflict" description="In Ref. 2; AAA43036." evidence="24" ref="2">
    <original>V</original>
    <variation>I</variation>
    <location>
        <position position="2008"/>
    </location>
</feature>
<feature type="sequence conflict" description="In Ref. 2; AAA43036." evidence="24" ref="2">
    <original>T</original>
    <variation>H</variation>
    <location>
        <position position="2049"/>
    </location>
</feature>
<feature type="sequence conflict" description="In Ref. 2; AAA43036." evidence="24" ref="2">
    <original>T</original>
    <variation>K</variation>
    <location>
        <position position="2194"/>
    </location>
</feature>
<keyword id="KW-0002">3D-structure</keyword>
<keyword id="KW-0067">ATP-binding</keyword>
<keyword id="KW-0167">Capsid protein</keyword>
<keyword id="KW-0191">Covalent protein-RNA linkage</keyword>
<keyword id="KW-1262">Eukaryotic host gene expression shutoff by virus</keyword>
<keyword id="KW-1193">Eukaryotic host translation shutoff by virus</keyword>
<keyword id="KW-0347">Helicase</keyword>
<keyword id="KW-1035">Host cytoplasm</keyword>
<keyword id="KW-1036">Host cytoplasmic vesicle</keyword>
<keyword id="KW-1190">Host gene expression shutoff by virus</keyword>
<keyword id="KW-1043">Host membrane</keyword>
<keyword id="KW-1192">Host mRNA suppression by virus</keyword>
<keyword id="KW-1048">Host nucleus</keyword>
<keyword id="KW-0945">Host-virus interaction</keyword>
<keyword id="KW-0378">Hydrolase</keyword>
<keyword id="KW-1090">Inhibition of host innate immune response by virus</keyword>
<keyword id="KW-1099">Inhibition of host mRNA nuclear export by virus</keyword>
<keyword id="KW-1088">Inhibition of host RIG-I by virus</keyword>
<keyword id="KW-1113">Inhibition of host RLR pathway by virus</keyword>
<keyword id="KW-0407">Ion channel</keyword>
<keyword id="KW-0406">Ion transport</keyword>
<keyword id="KW-0449">Lipoprotein</keyword>
<keyword id="KW-0472">Membrane</keyword>
<keyword id="KW-0479">Metal-binding</keyword>
<keyword id="KW-0519">Myristate</keyword>
<keyword id="KW-0547">Nucleotide-binding</keyword>
<keyword id="KW-0548">Nucleotidyltransferase</keyword>
<keyword id="KW-0597">Phosphoprotein</keyword>
<keyword id="KW-0645">Protease</keyword>
<keyword id="KW-0688">Ribosomal frameshifting</keyword>
<keyword id="KW-0694">RNA-binding</keyword>
<keyword id="KW-0696">RNA-directed RNA polymerase</keyword>
<keyword id="KW-1143">T=pseudo3 icosahedral capsid protein</keyword>
<keyword id="KW-0788">Thiol protease</keyword>
<keyword id="KW-0808">Transferase</keyword>
<keyword id="KW-0813">Transport</keyword>
<keyword id="KW-1161">Viral attachment to host cell</keyword>
<keyword id="KW-0899">Viral immunoevasion</keyword>
<keyword id="KW-1182">Viral ion channel</keyword>
<keyword id="KW-0693">Viral RNA replication</keyword>
<keyword id="KW-0946">Virion</keyword>
<keyword id="KW-1160">Virus entry into host cell</keyword>
<keyword id="KW-0862">Zinc</keyword>
<keyword id="KW-0863">Zinc-finger</keyword>
<evidence type="ECO:0000250" key="1"/>
<evidence type="ECO:0000250" key="2">
    <source>
        <dbReference type="UniProtKB" id="P03300"/>
    </source>
</evidence>
<evidence type="ECO:0000250" key="3">
    <source>
        <dbReference type="UniProtKB" id="P03305"/>
    </source>
</evidence>
<evidence type="ECO:0000250" key="4">
    <source>
        <dbReference type="UniProtKB" id="P08545"/>
    </source>
</evidence>
<evidence type="ECO:0000250" key="5">
    <source>
        <dbReference type="UniProtKB" id="P08617"/>
    </source>
</evidence>
<evidence type="ECO:0000250" key="6">
    <source>
        <dbReference type="UniProtKB" id="P12296"/>
    </source>
</evidence>
<evidence type="ECO:0000250" key="7">
    <source>
        <dbReference type="UniProtKB" id="Q66282"/>
    </source>
</evidence>
<evidence type="ECO:0000250" key="8">
    <source>
        <dbReference type="UniProtKB" id="Q66765"/>
    </source>
</evidence>
<evidence type="ECO:0000255" key="9"/>
<evidence type="ECO:0000255" key="10">
    <source>
        <dbReference type="PROSITE-ProRule" id="PRU00539"/>
    </source>
</evidence>
<evidence type="ECO:0000255" key="11">
    <source>
        <dbReference type="PROSITE-ProRule" id="PRU00551"/>
    </source>
</evidence>
<evidence type="ECO:0000255" key="12">
    <source>
        <dbReference type="PROSITE-ProRule" id="PRU01222"/>
    </source>
</evidence>
<evidence type="ECO:0000269" key="13">
    <source>
    </source>
</evidence>
<evidence type="ECO:0000269" key="14">
    <source>
    </source>
</evidence>
<evidence type="ECO:0000269" key="15">
    <source>
    </source>
</evidence>
<evidence type="ECO:0000269" key="16">
    <source>
    </source>
</evidence>
<evidence type="ECO:0000269" key="17">
    <source>
    </source>
</evidence>
<evidence type="ECO:0000269" key="18">
    <source>
    </source>
</evidence>
<evidence type="ECO:0000269" key="19">
    <source>
    </source>
</evidence>
<evidence type="ECO:0000269" key="20">
    <source>
    </source>
</evidence>
<evidence type="ECO:0000269" key="21">
    <source>
    </source>
</evidence>
<evidence type="ECO:0000269" key="22">
    <source>
    </source>
</evidence>
<evidence type="ECO:0000269" key="23">
    <source>
    </source>
</evidence>
<evidence type="ECO:0000305" key="24"/>
<evidence type="ECO:0000305" key="25">
    <source>
    </source>
</evidence>
<organism>
    <name type="scientific">Encephalomyocarditis virus</name>
    <dbReference type="NCBI Taxonomy" id="12104"/>
    <lineage>
        <taxon>Viruses</taxon>
        <taxon>Riboviria</taxon>
        <taxon>Orthornavirae</taxon>
        <taxon>Pisuviricota</taxon>
        <taxon>Pisoniviricetes</taxon>
        <taxon>Picornavirales</taxon>
        <taxon>Picornaviridae</taxon>
        <taxon>Caphthovirinae</taxon>
        <taxon>Cardiovirus</taxon>
        <taxon>Cardiovirus A</taxon>
    </lineage>
</organism>
<reference key="1">
    <citation type="journal article" date="1984" name="Nucleic Acids Res.">
        <title>The nucleotide and deduced amino acid sequences of the encephalomyocarditis viral polyprotein coding region.</title>
        <authorList>
            <person name="Palmenberg A.C."/>
            <person name="Kirby E.M."/>
            <person name="Janda M.R."/>
            <person name="Drake N.L."/>
            <person name="Duke G.M."/>
            <person name="Potratz K.F."/>
            <person name="Collett M.S."/>
        </authorList>
    </citation>
    <scope>NUCLEOTIDE SEQUENCE [GENOMIC RNA]</scope>
    <scope>PROTEOLYTIC CLEAVAGE (GENOME POLYPROTEIN)</scope>
</reference>
<reference key="2">
    <citation type="journal article" date="1984" name="Bioorg. Khim.">
        <title>Nucleotide sequence of the 3'-terminus of encephalomyocarditis virus RNA.</title>
        <authorList>
            <person name="Petrov N.A."/>
            <person name="Chizhikov V.E."/>
            <person name="Blinov V.M."/>
            <person name="Karginov V.A."/>
            <person name="Mikryukov N.N."/>
            <person name="Gutorov V.V."/>
            <person name="Grishaev M.P."/>
            <person name="Beklemishev A.B."/>
            <person name="Vassilenko S.K."/>
        </authorList>
    </citation>
    <scope>NUCLEOTIDE SEQUENCE [GENOMIC RNA] OF 1337-2290</scope>
</reference>
<reference key="3">
    <citation type="journal article" date="1984" name="EMBO J.">
        <title>Encephalomyocarditis virus RNA synthesis in vitro is protein-primed.</title>
        <authorList>
            <person name="Vartapetian A.B."/>
            <person name="Koonin E.V."/>
            <person name="Agol V.I."/>
            <person name="Bogdanov A.A."/>
        </authorList>
    </citation>
    <scope>FUNCTION (VPG)</scope>
</reference>
<reference key="4">
    <citation type="journal article" date="1987" name="Proc. Natl. Acad. Sci. U.S.A.">
        <title>Implications of the picornavirus capsid structure for polyprotein processing.</title>
        <authorList>
            <person name="Arnold E."/>
            <person name="Luo M."/>
            <person name="Vriend G."/>
            <person name="Rossmann M.G."/>
            <person name="Palmenberg A.C."/>
            <person name="Parks G.D."/>
            <person name="Nicklin M.J."/>
            <person name="Wimmer E."/>
        </authorList>
    </citation>
    <scope>PROTEOLYTIC CLEAVAGE (GENOME POLYPROTEIN)</scope>
</reference>
<reference key="5">
    <citation type="journal article" date="2009" name="J. Gen. Virol.">
        <title>TRIM22 E3 ubiquitin ligase activity is required to mediate antiviral activity against encephalomyocarditis virus.</title>
        <authorList>
            <person name="Eldin P."/>
            <person name="Papon L."/>
            <person name="Oteiza A."/>
            <person name="Brocchi E."/>
            <person name="Lawson T.G."/>
            <person name="Mechti N."/>
        </authorList>
    </citation>
    <scope>INTERACTION WITH HUMAN TRIM22 (PROTEASE 3C)</scope>
</reference>
<reference key="6">
    <citation type="journal article" date="2011" name="Autophagy">
        <title>Autophagy promotes the replication of encephalomyocarditis virus in host cells.</title>
        <authorList>
            <person name="Zhang Y."/>
            <person name="Li Z."/>
            <person name="Ge X."/>
            <person name="Guo X."/>
            <person name="Yang H."/>
        </authorList>
    </citation>
    <scope>SUBCELLULAR LOCATION (PROTEIN 3A)</scope>
    <source>
        <strain>BJC3</strain>
    </source>
</reference>
<reference key="7">
    <citation type="journal article" date="2012" name="J. Virol.">
        <title>Site-specific cleavage of the host poly(A) binding protein by the encephalomyocarditis virus 3C proteinase stimulates viral replication.</title>
        <authorList>
            <person name="Kobayashi M."/>
            <person name="Arias C."/>
            <person name="Garabedian A."/>
            <person name="Palmenberg A.C."/>
            <person name="Mohr I."/>
        </authorList>
    </citation>
    <scope>FUNCTION (PROTEASE 3C)</scope>
</reference>
<reference key="8">
    <citation type="journal article" date="2014" name="J. Biol. Chem.">
        <title>A translation system reconstituted with human factors proves that processing of encephalomyocarditis virus proteins 2A and 2B occurs in the elongation phase of translation without eukaryotic release factors.</title>
        <authorList>
            <person name="Machida K."/>
            <person name="Mikami S."/>
            <person name="Masutani M."/>
            <person name="Mishima K."/>
            <person name="Kobayashi T."/>
            <person name="Imataka H."/>
        </authorList>
    </citation>
    <scope>CLEAVAGE BY RIBOSOMAL SKIP (GENOME POLYPROTEIN)</scope>
</reference>
<reference key="9">
    <citation type="journal article" date="2015" name="J. Biol. Chem.">
        <title>Encephalomyocarditis Virus 3C Protease Relieves TRAF Family Member-associated NF-kappaB Activator (TANK) Inhibitory Effect on TRAF6-mediated NF-kappaB Signaling through Cleavage of TANK.</title>
        <authorList>
            <person name="Huang L."/>
            <person name="Liu Q."/>
            <person name="Zhang L."/>
            <person name="Zhang Q."/>
            <person name="Hu L."/>
            <person name="Li C."/>
            <person name="Wang S."/>
            <person name="Li J."/>
            <person name="Zhang Y."/>
            <person name="Yu H."/>
            <person name="Wang Y."/>
            <person name="Zhong Z."/>
            <person name="Xiong T."/>
            <person name="Xia X."/>
            <person name="Wang X."/>
            <person name="Yu L."/>
            <person name="Deng G."/>
            <person name="Cai X."/>
            <person name="Cui S."/>
            <person name="Weng C."/>
        </authorList>
    </citation>
    <scope>FUNCTION (PROTEASE 3C)</scope>
</reference>
<reference key="10">
    <citation type="journal article" date="2017" name="Biochem. J.">
        <title>Encephalomyocarditis virus 3C protease attenuates type I interferon production through disrupting the TANK-TBK1-IKKepsilon-IRF3 complex.</title>
        <authorList>
            <person name="Huang L."/>
            <person name="Xiong T."/>
            <person name="Yu H."/>
            <person name="Zhang Q."/>
            <person name="Zhang K."/>
            <person name="Li C."/>
            <person name="Hu L."/>
            <person name="Zhang Y."/>
            <person name="Zhang L."/>
            <person name="Liu Q."/>
            <person name="Wang S."/>
            <person name="He X."/>
            <person name="Bu Z."/>
            <person name="Cai X."/>
            <person name="Cui S."/>
            <person name="Li J."/>
            <person name="Weng C."/>
        </authorList>
    </citation>
    <scope>FUNCTION (PROTEASE 3C)</scope>
    <scope>MUTAGENESIS OF HIS-1671 AND CYS-1784</scope>
    <scope>ACTIVE SITE (PROTEASE 3C)</scope>
    <source>
        <strain>HB10</strain>
    </source>
</reference>
<reference key="11">
    <citation type="journal article" date="2018" name="Antiviral Res.">
        <title>Encephalomyocarditis virus 2C protein antagonizes interferon-beta signaling pathway through interaction with MDA5.</title>
        <authorList>
            <person name="Li L."/>
            <person name="Fan H."/>
            <person name="Song Z."/>
            <person name="Liu X."/>
            <person name="Bai J."/>
            <person name="Jiang P."/>
        </authorList>
    </citation>
    <scope>FUNCTION (PROTEIN 2C)</scope>
    <scope>MUTAGENESIS OF LYS-1217; VAL-1218 AND VAL-1219</scope>
    <scope>INTERACTION WITH HOST IFIH1/MDA5</scope>
    <source>
        <strain>NJ08</strain>
    </source>
</reference>
<reference key="12">
    <citation type="journal article" date="2019" name="Front. Microbiol.">
        <title>Transmembrane Protein 39A Promotes the Replication of Encephalomyocarditis Virus via Autophagy Pathway.</title>
        <authorList>
            <person name="Li X."/>
            <person name="Ma R."/>
            <person name="Li Q."/>
            <person name="Li S."/>
            <person name="Zhang H."/>
            <person name="Xie J."/>
            <person name="Bai J."/>
            <person name="Idris A."/>
            <person name="Feng R."/>
        </authorList>
    </citation>
    <scope>INTERACTION WITH HUMAN TMEM39A (CAPSID PROTEINS VP1 AND VP2)</scope>
</reference>
<organismHost>
    <name type="scientific">Aotus trivirgatus</name>
    <name type="common">Three-striped night monkey</name>
    <name type="synonym">Douroucouli</name>
    <dbReference type="NCBI Taxonomy" id="9505"/>
</organismHost>
<organismHost>
    <name type="scientific">Callitrichinae sp.</name>
    <dbReference type="NCBI Taxonomy" id="38020"/>
</organismHost>
<organismHost>
    <name type="scientific">Homo sapiens</name>
    <name type="common">Human</name>
    <dbReference type="NCBI Taxonomy" id="9606"/>
</organismHost>
<organismHost>
    <name type="scientific">Macaca mulatta</name>
    <name type="common">Rhesus macaque</name>
    <dbReference type="NCBI Taxonomy" id="9544"/>
</organismHost>
<organismHost>
    <name type="scientific">Mandrillus</name>
    <name type="common">forest baboons</name>
    <dbReference type="NCBI Taxonomy" id="9567"/>
</organismHost>
<organismHost>
    <name type="scientific">Mus musculus</name>
    <name type="common">Mouse</name>
    <dbReference type="NCBI Taxonomy" id="10090"/>
</organismHost>
<organismHost>
    <name type="scientific">Pan troglodytes</name>
    <name type="common">Chimpanzee</name>
    <dbReference type="NCBI Taxonomy" id="9598"/>
</organismHost>
<organismHost>
    <name type="scientific">Rattus</name>
    <dbReference type="NCBI Taxonomy" id="10114"/>
</organismHost>
<organismHost>
    <name type="scientific">Sigmodon hispidus</name>
    <name type="common">Hispid cotton rat</name>
    <dbReference type="NCBI Taxonomy" id="42415"/>
</organismHost>
<organismHost>
    <name type="scientific">Sus scrofa</name>
    <name type="common">Pig</name>
    <dbReference type="NCBI Taxonomy" id="9823"/>
</organismHost>
<proteinExistence type="evidence at protein level"/>
<comment type="function">
    <molecule>Leader protein</molecule>
    <text evidence="8">Forms a complex with host RAN and probably binds to exportins carrying activated MAPK in order to mediate the hyperphosphorylation of host Phe/Gly containing nuclear pore proteins (Nups) resulting in cessation of active nucleocytoplasmic transport (By similarity). Proteins with NLS signals fail to import, cellular mRNAs fail to export, and some proteins small enough for diffusion are not retained anymore (efflux) (By similarity). The resulting inhibition of cellular protein synthesis serves to ensure maximal viral gene expression and to evade host immune response (By similarity).</text>
</comment>
<comment type="function">
    <molecule>Capsid protein VP1</molecule>
    <text evidence="6">Forms an icosahedral capsid of pseudo T=3 symmetry with capsid proteins VP2 and VP3. Together they form an icosahedral capsid composed of 60 copies of each VP1, VP2, and VP3, with a diameter of approximately 300 Angstroms. VP4 lies on the inner surface of the protein shell formed by VP1, VP2 and VP3. All the three latter proteins contain a beta-sheet structure called beta-barrel jelly roll. VP1 is situated at the 12 fivefold axes, whereas VP2 and VP3 are located at the quasi-sixfold axes.</text>
</comment>
<comment type="function">
    <molecule>Capsid protein VP2</molecule>
    <text evidence="6">Forms an icosahedral capsid of pseudo T=3 symmetry with capsid proteins VP2 and VP3. Together they form an icosahedral capsid composed of 60 copies of each VP1, VP2, and VP3, with a diameter of approximately 300 Angstroms. VP4 lies on the inner surface of the protein shell formed by VP1, VP2 and VP3. All the three latter proteins contain a beta-sheet structure called beta-barrel jelly roll. VP1 is situated at the 12 fivefold axes, whereas VP2 and VP3 are located at the quasi-sixfold axes.</text>
</comment>
<comment type="function">
    <molecule>Capsid protein VP3</molecule>
    <text evidence="6">Forms an icosahedral capsid of pseudo T=3 symmetry with capsid proteins VP2 and VP3. Together they form an icosahedral capsid composed of 60 copies of each VP1, VP2, and VP3, with a diameter of approximately 300 Angstroms. VP4 lies on the inner surface of the protein shell formed by VP1, VP2 and VP3. All the three latter proteins contain a beta-sheet structure called beta-barrel jelly roll. VP1 is situated at the 12 fivefold axes, whereas VP2 and VP3 are located at the quasi-sixfold axes.</text>
</comment>
<comment type="function">
    <molecule>Capsid protein VP4</molecule>
    <text evidence="2 6">Lies on the inner surface of the capsid shell (By similarity). After binding to the host receptor, the capsid undergoes conformational changes (By similarity). Capsid protein VP4 is released, capsid protein VP1 N-terminus is externalized, and together, they shape a pore in the host membrane through which the viral genome is translocated into the host cell cytoplasm (By similarity). After genome has been released, the channel shrinks (By similarity).</text>
</comment>
<comment type="function">
    <molecule>Capsid protein VP0</molecule>
    <text evidence="5">VP0 precursor is a component of immature procapsids.</text>
</comment>
<comment type="function">
    <molecule>Protein 2A</molecule>
    <text evidence="6 8">Involved in host translation shutoff by inhibiting cap-dependent mRNA translation (By similarity). Nuclear localization is required for this function (By similarity). The resulting inhibition of cellular protein synthesis serves to ensure maximal viral gene expression and to evade host immune response (By similarity). Inhibits the phosphorylation of the leader protein (By similarity). Binds to the RNA stem-loop essential for the ribosomal frameshift event and trans-activates the production of protein 2B* (By similarity).</text>
</comment>
<comment type="function">
    <molecule>Protein 2B</molecule>
    <text evidence="1">Affects membrane integrity and causes an increase in membrane permeability.</text>
</comment>
<comment type="function">
    <molecule>Protein 2C</molecule>
    <text evidence="3 4 19">Associates with and induces structural rearrangements of intracellular membranes (By similarity). It displays RNA-binding, nucleotide binding and NTPase activities (By similarity). Interacts with IFIH1/MDA5 to inhibit the induction of the IFN-beta signal pathway (PubMed:30312637).</text>
</comment>
<comment type="function">
    <molecule>Protein 3A</molecule>
    <text evidence="1">Serves as membrane anchor via its hydrophobic domain.</text>
</comment>
<comment type="function">
    <molecule>VPg</molecule>
    <text evidence="22">Forms a primer, VPg-pU, which is utilized by the polymerase for the initiation of RNA chains.</text>
</comment>
<comment type="function">
    <molecule>Protease 3C</molecule>
    <text evidence="6 15 17 18">Cysteine protease that generates mature viral proteins from the precursor polyprotein (By similarity). In addition to its proteolytic activity, it binds to viral RNA, and thus influences viral genome replication. RNA and substrate cooperatively bind to the protease. Cleaves host PABP1, this cleavage is important for viral replication (PubMed:22837200). Cleaves host TANK and disrupts the TANK-TBK1-IKKepsilon-IRF3 complex, thereby inhibiting the induction of the IFN-beta signal pathway (PubMed:26363073, PubMed:28487378).</text>
</comment>
<comment type="function">
    <molecule>RNA-directed RNA polymerase</molecule>
    <text evidence="6">Replicates the genomic and antigenomic RNAs by recognizing replications specific signals (By similarity). Performs VPg uridylylation (By similarity).</text>
</comment>
<comment type="catalytic activity">
    <reaction evidence="10">
        <text>RNA(n) + a ribonucleoside 5'-triphosphate = RNA(n+1) + diphosphate</text>
        <dbReference type="Rhea" id="RHEA:21248"/>
        <dbReference type="Rhea" id="RHEA-COMP:14527"/>
        <dbReference type="Rhea" id="RHEA-COMP:17342"/>
        <dbReference type="ChEBI" id="CHEBI:33019"/>
        <dbReference type="ChEBI" id="CHEBI:61557"/>
        <dbReference type="ChEBI" id="CHEBI:140395"/>
        <dbReference type="EC" id="2.7.7.48"/>
    </reaction>
</comment>
<comment type="catalytic activity">
    <reaction evidence="24">
        <text>ATP + H2O = ADP + phosphate + H(+)</text>
        <dbReference type="Rhea" id="RHEA:13065"/>
        <dbReference type="ChEBI" id="CHEBI:15377"/>
        <dbReference type="ChEBI" id="CHEBI:15378"/>
        <dbReference type="ChEBI" id="CHEBI:30616"/>
        <dbReference type="ChEBI" id="CHEBI:43474"/>
        <dbReference type="ChEBI" id="CHEBI:456216"/>
        <dbReference type="EC" id="3.6.4.13"/>
    </reaction>
</comment>
<comment type="catalytic activity">
    <reaction evidence="12">
        <text>Selective cleavage of Gln-|-Gly bond in the poliovirus polyprotein. In other picornavirus reactions Glu may be substituted for Gln, and Ser or Thr for Gly.</text>
        <dbReference type="EC" id="3.4.22.28"/>
    </reaction>
</comment>
<comment type="subunit">
    <molecule>Protease 3C</molecule>
    <text evidence="13">Interacts with host TRIM22; this interaction leads to the ubiquitination of protease 3C and may restrict the virus replication (PubMed:19218198).</text>
</comment>
<comment type="subunit">
    <molecule>Protein 2A</molecule>
    <text evidence="8">Interacts with host EIF4E (By similarity). Interacts with the leader protein (By similarity).</text>
</comment>
<comment type="subunit">
    <molecule>Leader protein</molecule>
    <text evidence="8">Interacts with host RAN; the complex L-RAN recruits cellular kinases responsible for the L-induced nucleocytoplasmic trafficking inhibition (By similarity). The complex L-RAN can further bind to the host exportins XPO1/CRM1 and CSE1L/CAS (By similarity). Interacts with the protein 2A (By similarity).</text>
</comment>
<comment type="subunit">
    <molecule>Protein 2C</molecule>
    <text evidence="19">Interacts with host IFIH1/MDA5; this interaction inhibits the induction of the IFN-beta signal pathway (PubMed:30312637).</text>
</comment>
<comment type="subunit">
    <molecule>Capsid protein VP1</molecule>
    <text evidence="20">Interacts with host TMEM39A.</text>
</comment>
<comment type="subunit">
    <molecule>Capsid protein VP2</molecule>
    <text evidence="20">Interacts with host TMEM39A.</text>
</comment>
<comment type="interaction">
    <interactant intactId="EBI-6726189">
        <id>PRO_0000039791</id>
    </interactant>
    <interactant intactId="EBI-304008">
        <id>P29590-5</id>
        <label>PML</label>
    </interactant>
    <organismsDiffer>true</organismsDiffer>
    <experiments>3</experiments>
</comment>
<comment type="subcellular location">
    <molecule>Capsid protein VP2</molecule>
    <subcellularLocation>
        <location evidence="6">Virion</location>
    </subcellularLocation>
    <subcellularLocation>
        <location evidence="24">Host cytoplasm</location>
    </subcellularLocation>
</comment>
<comment type="subcellular location">
    <molecule>Capsid protein VP3</molecule>
    <subcellularLocation>
        <location evidence="6">Virion</location>
    </subcellularLocation>
    <subcellularLocation>
        <location evidence="24">Host cytoplasm</location>
    </subcellularLocation>
</comment>
<comment type="subcellular location">
    <molecule>Capsid protein VP1</molecule>
    <subcellularLocation>
        <location evidence="6">Virion</location>
    </subcellularLocation>
    <subcellularLocation>
        <location evidence="24">Host cytoplasm</location>
    </subcellularLocation>
</comment>
<comment type="subcellular location">
    <molecule>Protein 2A</molecule>
    <subcellularLocation>
        <location evidence="8">Host nucleus</location>
        <location evidence="8">Host nucleolus</location>
    </subcellularLocation>
</comment>
<comment type="subcellular location">
    <molecule>Protein 2B</molecule>
    <subcellularLocation>
        <location evidence="24">Host cytoplasmic vesicle membrane</location>
        <topology evidence="24">Peripheral membrane protein</topology>
        <orientation evidence="24">Cytoplasmic side</orientation>
    </subcellularLocation>
    <text evidence="24">Probably localizes to the surface of intracellular membrane vesicles that are induced after virus infection as the site for viral RNA replication. These vesicles are probably autophagosome-like vesicles.</text>
</comment>
<comment type="subcellular location">
    <molecule>Protein 2C</molecule>
    <subcellularLocation>
        <location evidence="24">Host cytoplasmic vesicle membrane</location>
        <topology evidence="24">Peripheral membrane protein</topology>
        <orientation evidence="24">Cytoplasmic side</orientation>
    </subcellularLocation>
    <text evidence="24">Probably localizes to the surface of intracellular membrane vesicles that are induced after virus infection as the site for viral RNA replication. These vesicles are probably autophagosome-like vesicles.</text>
</comment>
<comment type="subcellular location">
    <molecule>Protein 3A</molecule>
    <subcellularLocation>
        <location evidence="14">Host cytoplasmic vesicle membrane</location>
        <topology evidence="24">Peripheral membrane protein</topology>
        <orientation evidence="24">Cytoplasmic side</orientation>
    </subcellularLocation>
    <text evidence="14">Probably localizes to the surface of intracellular membrane vesicles that are induced after virus infection as the site for viral RNA replication. These vesicles are probably autophagosome-like vesicles.</text>
</comment>
<comment type="subcellular location">
    <molecule>VPg</molecule>
    <subcellularLocation>
        <location evidence="24">Virion</location>
    </subcellularLocation>
</comment>
<comment type="subcellular location">
    <molecule>Protease 3C</molecule>
    <subcellularLocation>
        <location evidence="24">Host cytoplasm</location>
    </subcellularLocation>
</comment>
<comment type="subcellular location">
    <molecule>RNA-directed RNA polymerase</molecule>
    <subcellularLocation>
        <location evidence="24">Host cytoplasmic vesicle membrane</location>
        <topology evidence="24">Peripheral membrane protein</topology>
        <orientation evidence="24">Cytoplasmic side</orientation>
    </subcellularLocation>
    <text evidence="24">Probably localizes to the surface of intracellular membrane vesicles that are induced after virus infection as the site for viral RNA replication. These vesicles are probably autophagosome-like vesicles.</text>
</comment>
<comment type="alternative products">
    <event type="ribosomal frameshifting"/>
    <isoform>
        <id>P03304-1</id>
        <name>Genome polyprotein</name>
        <sequence type="displayed"/>
    </isoform>
    <isoform>
        <id>P0DJX7-1</id>
        <name>2B*</name>
        <sequence type="external"/>
    </isoform>
</comment>
<comment type="PTM">
    <molecule>Leader protein</molecule>
    <text evidence="8">Phosphorylated.</text>
</comment>
<comment type="PTM">
    <molecule>Genome polyprotein</molecule>
    <text evidence="16 21 23">Specific enzymatic cleavages by the viral protease in vivo yield a variety of precursors and mature proteins (PubMed:3467351, PubMed:6324136). The polyprotein seems to be cotranslationally cleaved at the 2A/2B junction by a ribosomal skip from one codon to the next without formation of a peptide bond (PubMed:25258322). This process would release the P1-2A peptide from the translational complex (PubMed:25258322).</text>
</comment>
<comment type="PTM">
    <molecule>Capsid protein VP0</molecule>
    <text evidence="2">During virion maturation, immature virions are rendered infectious following cleavage of VP0 into VP4 and VP2. This maturation seems to be an autocatalytic event triggered by the presence of RNA in the capsid and is followed by a conformational change of the particle.</text>
</comment>
<comment type="PTM">
    <molecule>VPg</molecule>
    <text evidence="6">Uridylylated by the polymerase and is covalently linked to the 5'-end of genomic RNA. This uridylylated form acts as a nucleotide-peptide primer for the polymerase.</text>
</comment>
<comment type="PTM">
    <molecule>Capsid protein VP4</molecule>
    <text evidence="7">Myristoylation is required during RNA encapsidation and formation of the mature virus particle.</text>
</comment>
<comment type="miscellaneous">
    <molecule>Isoform Genome polyprotein</molecule>
    <text evidence="6">Produced by conventional translation.</text>
</comment>
<comment type="similarity">
    <text evidence="24">Belongs to the picornaviruses polyprotein family.</text>
</comment>
<dbReference type="EC" id="3.6.4.13"/>
<dbReference type="EC" id="3.4.22.28" evidence="6"/>
<dbReference type="EC" id="2.7.7.48" evidence="10"/>
<dbReference type="EMBL" id="X00463">
    <property type="protein sequence ID" value="CAA25152.1"/>
    <property type="molecule type" value="Genomic_RNA"/>
</dbReference>
<dbReference type="EMBL" id="M54935">
    <property type="protein sequence ID" value="AAA43036.1"/>
    <property type="molecule type" value="Genomic_RNA"/>
</dbReference>
<dbReference type="PIR" id="A03906">
    <property type="entry name" value="GNNYE"/>
</dbReference>
<dbReference type="PDB" id="8X3V">
    <property type="method" value="X-ray"/>
    <property type="resolution" value="2.90 A"/>
    <property type="chains" value="A/B=1300-1517"/>
</dbReference>
<dbReference type="PDBsum" id="8X3V"/>
<dbReference type="SMR" id="P03304"/>
<dbReference type="IntAct" id="P03304">
    <property type="interactions" value="1"/>
</dbReference>
<dbReference type="MEROPS" id="C03.009"/>
<dbReference type="Proteomes" id="UP000008660">
    <property type="component" value="Genome"/>
</dbReference>
<dbReference type="GO" id="GO:0044162">
    <property type="term" value="C:host cell cytoplasmic vesicle membrane"/>
    <property type="evidence" value="ECO:0007669"/>
    <property type="project" value="UniProtKB-SubCell"/>
</dbReference>
<dbReference type="GO" id="GO:0044196">
    <property type="term" value="C:host cell nucleolus"/>
    <property type="evidence" value="ECO:0007669"/>
    <property type="project" value="UniProtKB-SubCell"/>
</dbReference>
<dbReference type="GO" id="GO:0016020">
    <property type="term" value="C:membrane"/>
    <property type="evidence" value="ECO:0007669"/>
    <property type="project" value="UniProtKB-KW"/>
</dbReference>
<dbReference type="GO" id="GO:0039618">
    <property type="term" value="C:T=pseudo3 icosahedral viral capsid"/>
    <property type="evidence" value="ECO:0007669"/>
    <property type="project" value="UniProtKB-KW"/>
</dbReference>
<dbReference type="GO" id="GO:0005524">
    <property type="term" value="F:ATP binding"/>
    <property type="evidence" value="ECO:0007669"/>
    <property type="project" value="UniProtKB-KW"/>
</dbReference>
<dbReference type="GO" id="GO:0016887">
    <property type="term" value="F:ATP hydrolysis activity"/>
    <property type="evidence" value="ECO:0007669"/>
    <property type="project" value="RHEA"/>
</dbReference>
<dbReference type="GO" id="GO:0015267">
    <property type="term" value="F:channel activity"/>
    <property type="evidence" value="ECO:0007669"/>
    <property type="project" value="UniProtKB-KW"/>
</dbReference>
<dbReference type="GO" id="GO:0004197">
    <property type="term" value="F:cysteine-type endopeptidase activity"/>
    <property type="evidence" value="ECO:0007669"/>
    <property type="project" value="UniProtKB-EC"/>
</dbReference>
<dbReference type="GO" id="GO:0003723">
    <property type="term" value="F:RNA binding"/>
    <property type="evidence" value="ECO:0007669"/>
    <property type="project" value="UniProtKB-KW"/>
</dbReference>
<dbReference type="GO" id="GO:0003724">
    <property type="term" value="F:RNA helicase activity"/>
    <property type="evidence" value="ECO:0007669"/>
    <property type="project" value="UniProtKB-EC"/>
</dbReference>
<dbReference type="GO" id="GO:0003968">
    <property type="term" value="F:RNA-directed RNA polymerase activity"/>
    <property type="evidence" value="ECO:0000314"/>
    <property type="project" value="CACAO"/>
</dbReference>
<dbReference type="GO" id="GO:0005198">
    <property type="term" value="F:structural molecule activity"/>
    <property type="evidence" value="ECO:0007669"/>
    <property type="project" value="InterPro"/>
</dbReference>
<dbReference type="GO" id="GO:0008270">
    <property type="term" value="F:zinc ion binding"/>
    <property type="evidence" value="ECO:0007669"/>
    <property type="project" value="UniProtKB-KW"/>
</dbReference>
<dbReference type="GO" id="GO:0006351">
    <property type="term" value="P:DNA-templated transcription"/>
    <property type="evidence" value="ECO:0007669"/>
    <property type="project" value="InterPro"/>
</dbReference>
<dbReference type="GO" id="GO:0034220">
    <property type="term" value="P:monoatomic ion transmembrane transport"/>
    <property type="evidence" value="ECO:0007669"/>
    <property type="project" value="UniProtKB-KW"/>
</dbReference>
<dbReference type="GO" id="GO:0006508">
    <property type="term" value="P:proteolysis"/>
    <property type="evidence" value="ECO:0007669"/>
    <property type="project" value="UniProtKB-KW"/>
</dbReference>
<dbReference type="GO" id="GO:0046718">
    <property type="term" value="P:symbiont entry into host cell"/>
    <property type="evidence" value="ECO:0007669"/>
    <property type="project" value="UniProtKB-KW"/>
</dbReference>
<dbReference type="GO" id="GO:0039520">
    <property type="term" value="P:symbiont-mediated activation of host autophagy"/>
    <property type="evidence" value="ECO:0000314"/>
    <property type="project" value="UniProtKB"/>
</dbReference>
<dbReference type="GO" id="GO:0039540">
    <property type="term" value="P:symbiont-mediated suppression of host cytoplasmic pattern recognition receptor signaling pathway via inhibition of RIG-I activity"/>
    <property type="evidence" value="ECO:0007669"/>
    <property type="project" value="UniProtKB-KW"/>
</dbReference>
<dbReference type="GO" id="GO:0039522">
    <property type="term" value="P:symbiont-mediated suppression of host mRNA export from nucleus"/>
    <property type="evidence" value="ECO:0007669"/>
    <property type="project" value="UniProtKB-KW"/>
</dbReference>
<dbReference type="GO" id="GO:0039694">
    <property type="term" value="P:viral RNA genome replication"/>
    <property type="evidence" value="ECO:0007669"/>
    <property type="project" value="InterPro"/>
</dbReference>
<dbReference type="GO" id="GO:0075523">
    <property type="term" value="P:viral translational frameshifting"/>
    <property type="evidence" value="ECO:0007669"/>
    <property type="project" value="UniProtKB-KW"/>
</dbReference>
<dbReference type="GO" id="GO:0019062">
    <property type="term" value="P:virion attachment to host cell"/>
    <property type="evidence" value="ECO:0007669"/>
    <property type="project" value="UniProtKB-KW"/>
</dbReference>
<dbReference type="CDD" id="cd23211">
    <property type="entry name" value="Cardiovirus_RdRp"/>
    <property type="match status" value="1"/>
</dbReference>
<dbReference type="CDD" id="cd00205">
    <property type="entry name" value="rhv_like"/>
    <property type="match status" value="3"/>
</dbReference>
<dbReference type="FunFam" id="1.20.960.20:FF:000002">
    <property type="entry name" value="Genome polyprotein"/>
    <property type="match status" value="1"/>
</dbReference>
<dbReference type="FunFam" id="2.40.10.10:FF:000145">
    <property type="entry name" value="Genome polyprotein"/>
    <property type="match status" value="1"/>
</dbReference>
<dbReference type="FunFam" id="2.60.120.20:FF:000013">
    <property type="entry name" value="Genome polyprotein"/>
    <property type="match status" value="1"/>
</dbReference>
<dbReference type="FunFam" id="3.30.70.270:FF:000046">
    <property type="entry name" value="Genome polyprotein"/>
    <property type="match status" value="1"/>
</dbReference>
<dbReference type="FunFam" id="3.30.70.270:FF:000065">
    <property type="entry name" value="Genome polyprotein"/>
    <property type="match status" value="1"/>
</dbReference>
<dbReference type="FunFam" id="4.10.90.10:FF:000002">
    <property type="entry name" value="Genome polyprotein"/>
    <property type="match status" value="1"/>
</dbReference>
<dbReference type="Gene3D" id="1.20.960.20">
    <property type="match status" value="1"/>
</dbReference>
<dbReference type="Gene3D" id="2.60.120.20">
    <property type="match status" value="3"/>
</dbReference>
<dbReference type="Gene3D" id="3.30.70.270">
    <property type="match status" value="2"/>
</dbReference>
<dbReference type="Gene3D" id="4.10.90.10">
    <property type="entry name" value="Capsid protein VP4 superfamily, Picornavirus"/>
    <property type="match status" value="1"/>
</dbReference>
<dbReference type="Gene3D" id="2.40.10.10">
    <property type="entry name" value="Trypsin-like serine proteases"/>
    <property type="match status" value="1"/>
</dbReference>
<dbReference type="InterPro" id="IPR015031">
    <property type="entry name" value="Capsid_VP4_Picornavir"/>
</dbReference>
<dbReference type="InterPro" id="IPR037080">
    <property type="entry name" value="Capsid_VP4_sf_Picornavirus"/>
</dbReference>
<dbReference type="InterPro" id="IPR043502">
    <property type="entry name" value="DNA/RNA_pol_sf"/>
</dbReference>
<dbReference type="InterPro" id="IPR004004">
    <property type="entry name" value="Helic/Pol/Pept_Calicivir-typ"/>
</dbReference>
<dbReference type="InterPro" id="IPR000605">
    <property type="entry name" value="Helicase_SF3_ssDNA/RNA_vir"/>
</dbReference>
<dbReference type="InterPro" id="IPR014759">
    <property type="entry name" value="Helicase_SF3_ssRNA_vir"/>
</dbReference>
<dbReference type="InterPro" id="IPR021573">
    <property type="entry name" value="Leader_pept_picornaV"/>
</dbReference>
<dbReference type="InterPro" id="IPR044067">
    <property type="entry name" value="PCV_3C_PRO"/>
</dbReference>
<dbReference type="InterPro" id="IPR000199">
    <property type="entry name" value="Peptidase_C3A/C3B_picornavir"/>
</dbReference>
<dbReference type="InterPro" id="IPR009003">
    <property type="entry name" value="Peptidase_S1_PA"/>
</dbReference>
<dbReference type="InterPro" id="IPR043504">
    <property type="entry name" value="Peptidase_S1_PA_chymotrypsin"/>
</dbReference>
<dbReference type="InterPro" id="IPR001676">
    <property type="entry name" value="Picornavirus_capsid"/>
</dbReference>
<dbReference type="InterPro" id="IPR043128">
    <property type="entry name" value="Rev_trsase/Diguanyl_cyclase"/>
</dbReference>
<dbReference type="InterPro" id="IPR033703">
    <property type="entry name" value="Rhv-like"/>
</dbReference>
<dbReference type="InterPro" id="IPR001205">
    <property type="entry name" value="RNA-dir_pol_C"/>
</dbReference>
<dbReference type="InterPro" id="IPR007094">
    <property type="entry name" value="RNA-dir_pol_PSvirus"/>
</dbReference>
<dbReference type="InterPro" id="IPR029053">
    <property type="entry name" value="Viral_coat"/>
</dbReference>
<dbReference type="InterPro" id="IPR037243">
    <property type="entry name" value="Viral_lead_polypep_zc_finger"/>
</dbReference>
<dbReference type="Pfam" id="PF00548">
    <property type="entry name" value="Peptidase_C3"/>
    <property type="match status" value="1"/>
</dbReference>
<dbReference type="Pfam" id="PF00680">
    <property type="entry name" value="RdRP_1"/>
    <property type="match status" value="1"/>
</dbReference>
<dbReference type="Pfam" id="PF00073">
    <property type="entry name" value="Rhv"/>
    <property type="match status" value="2"/>
</dbReference>
<dbReference type="Pfam" id="PF22663">
    <property type="entry name" value="Rhv_5"/>
    <property type="match status" value="1"/>
</dbReference>
<dbReference type="Pfam" id="PF00910">
    <property type="entry name" value="RNA_helicase"/>
    <property type="match status" value="1"/>
</dbReference>
<dbReference type="Pfam" id="PF08935">
    <property type="entry name" value="VP4_2"/>
    <property type="match status" value="1"/>
</dbReference>
<dbReference type="Pfam" id="PF11475">
    <property type="entry name" value="VP_N-CPKC"/>
    <property type="match status" value="1"/>
</dbReference>
<dbReference type="PRINTS" id="PR00918">
    <property type="entry name" value="CALICVIRUSNS"/>
</dbReference>
<dbReference type="SUPFAM" id="SSF56672">
    <property type="entry name" value="DNA/RNA polymerases"/>
    <property type="match status" value="1"/>
</dbReference>
<dbReference type="SUPFAM" id="SSF88633">
    <property type="entry name" value="Positive stranded ssRNA viruses"/>
    <property type="match status" value="2"/>
</dbReference>
<dbReference type="SUPFAM" id="SSF50494">
    <property type="entry name" value="Trypsin-like serine proteases"/>
    <property type="match status" value="1"/>
</dbReference>
<dbReference type="SUPFAM" id="SSF144251">
    <property type="entry name" value="Viral leader polypeptide zinc finger"/>
    <property type="match status" value="1"/>
</dbReference>
<dbReference type="PROSITE" id="PS51874">
    <property type="entry name" value="PCV_3C_PRO"/>
    <property type="match status" value="1"/>
</dbReference>
<dbReference type="PROSITE" id="PS50507">
    <property type="entry name" value="RDRP_SSRNA_POS"/>
    <property type="match status" value="1"/>
</dbReference>
<dbReference type="PROSITE" id="PS51218">
    <property type="entry name" value="SF3_HELICASE_2"/>
    <property type="match status" value="1"/>
</dbReference>
<protein>
    <recommendedName>
        <fullName>Genome polyprotein</fullName>
    </recommendedName>
    <component>
        <recommendedName>
            <fullName>Leader protein</fullName>
            <shortName>L</shortName>
        </recommendedName>
    </component>
    <component>
        <recommendedName>
            <fullName>Capsid protein VP0</fullName>
        </recommendedName>
        <alternativeName>
            <fullName>VP4-VP2</fullName>
        </alternativeName>
    </component>
    <component>
        <recommendedName>
            <fullName>Capsid protein VP4</fullName>
        </recommendedName>
        <alternativeName>
            <fullName>P1A</fullName>
        </alternativeName>
        <alternativeName>
            <fullName>Rho</fullName>
        </alternativeName>
        <alternativeName>
            <fullName>Virion protein 4</fullName>
        </alternativeName>
    </component>
    <component>
        <recommendedName>
            <fullName>Capsid protein VP2</fullName>
        </recommendedName>
        <alternativeName>
            <fullName>Beta</fullName>
        </alternativeName>
        <alternativeName>
            <fullName>P1B</fullName>
        </alternativeName>
        <alternativeName>
            <fullName>Virion protein 2</fullName>
        </alternativeName>
    </component>
    <component>
        <recommendedName>
            <fullName>Capsid protein VP3</fullName>
        </recommendedName>
        <alternativeName>
            <fullName>Gamma</fullName>
        </alternativeName>
        <alternativeName>
            <fullName>P1C</fullName>
        </alternativeName>
        <alternativeName>
            <fullName>Virion protein 3</fullName>
        </alternativeName>
    </component>
    <component>
        <recommendedName>
            <fullName>Capsid protein VP1</fullName>
        </recommendedName>
        <alternativeName>
            <fullName>Alpha</fullName>
        </alternativeName>
        <alternativeName>
            <fullName>P1D</fullName>
        </alternativeName>
        <alternativeName>
            <fullName>Virion protein 1</fullName>
        </alternativeName>
    </component>
    <component>
        <recommendedName>
            <fullName>Protein 2A</fullName>
            <shortName>P2A</shortName>
        </recommendedName>
        <alternativeName>
            <fullName>G</fullName>
        </alternativeName>
    </component>
    <component>
        <recommendedName>
            <fullName>Protein 2B</fullName>
            <shortName>I</shortName>
            <shortName>P2B</shortName>
        </recommendedName>
    </component>
    <component>
        <recommendedName>
            <fullName>Protein 2C</fullName>
            <shortName>C</shortName>
            <shortName>P2C</shortName>
            <ecNumber>3.6.4.13</ecNumber>
        </recommendedName>
    </component>
    <component>
        <recommendedName>
            <fullName>Protein 3A</fullName>
            <shortName>P3A</shortName>
        </recommendedName>
    </component>
    <component>
        <recommendedName>
            <fullName>VPg</fullName>
            <shortName>P3B</shortName>
        </recommendedName>
        <alternativeName>
            <fullName>H</fullName>
        </alternativeName>
        <alternativeName>
            <fullName>Protein 3B</fullName>
        </alternativeName>
    </component>
    <component>
        <recommendedName>
            <fullName>Protease 3C</fullName>
            <shortName>P3C</shortName>
            <ecNumber evidence="6">3.4.22.28</ecNumber>
        </recommendedName>
        <alternativeName>
            <fullName>Picornain 3C</fullName>
        </alternativeName>
        <alternativeName>
            <fullName>p22</fullName>
        </alternativeName>
    </component>
    <component>
        <recommendedName>
            <fullName>RNA-directed RNA polymerase</fullName>
            <shortName>RdRp</shortName>
            <ecNumber evidence="10">2.7.7.48</ecNumber>
        </recommendedName>
        <alternativeName>
            <fullName>3D polymerase</fullName>
            <shortName>3Dpol</shortName>
        </alternativeName>
        <alternativeName>
            <fullName>E</fullName>
        </alternativeName>
        <alternativeName>
            <fullName>Protein 3D</fullName>
            <shortName>3D</shortName>
        </alternativeName>
    </component>
</protein>
<name>POLG_EMCV</name>
<accession>P03304</accession>
<accession>Q66764</accession>